<dbReference type="EMBL" id="BC100076">
    <property type="protein sequence ID" value="AAI00077.1"/>
    <property type="molecule type" value="mRNA"/>
</dbReference>
<dbReference type="RefSeq" id="NP_001032256.1">
    <property type="nucleotide sequence ID" value="NM_001037179.1"/>
</dbReference>
<dbReference type="RefSeq" id="XP_006250604.1">
    <property type="nucleotide sequence ID" value="XM_006250542.5"/>
</dbReference>
<dbReference type="SMR" id="Q498T9"/>
<dbReference type="FunCoup" id="Q498T9">
    <property type="interactions" value="714"/>
</dbReference>
<dbReference type="STRING" id="10116.ENSRNOP00000002896"/>
<dbReference type="GlyCosmos" id="Q498T9">
    <property type="glycosylation" value="2 sites, No reported glycans"/>
</dbReference>
<dbReference type="GlyGen" id="Q498T9">
    <property type="glycosylation" value="2 sites"/>
</dbReference>
<dbReference type="iPTMnet" id="Q498T9"/>
<dbReference type="PhosphoSitePlus" id="Q498T9"/>
<dbReference type="jPOST" id="Q498T9"/>
<dbReference type="PaxDb" id="10116-ENSRNOP00000002896"/>
<dbReference type="Ensembl" id="ENSRNOT00000104559.1">
    <property type="protein sequence ID" value="ENSRNOP00000082962.1"/>
    <property type="gene ID" value="ENSRNOG00000065000.1"/>
</dbReference>
<dbReference type="GeneID" id="289443"/>
<dbReference type="KEGG" id="rno:289443"/>
<dbReference type="AGR" id="RGD:1306585"/>
<dbReference type="CTD" id="84230"/>
<dbReference type="RGD" id="1306585">
    <property type="gene designation" value="Lrrc8c"/>
</dbReference>
<dbReference type="eggNOG" id="KOG0619">
    <property type="taxonomic scope" value="Eukaryota"/>
</dbReference>
<dbReference type="GeneTree" id="ENSGT00940000159250"/>
<dbReference type="HOGENOM" id="CLU_019019_0_0_1"/>
<dbReference type="InParanoid" id="Q498T9"/>
<dbReference type="OMA" id="YNSIMYI"/>
<dbReference type="OrthoDB" id="660555at2759"/>
<dbReference type="PhylomeDB" id="Q498T9"/>
<dbReference type="TreeFam" id="TF331443"/>
<dbReference type="Reactome" id="R-RNO-5223345">
    <property type="pathway name" value="Miscellaneous transport and binding events"/>
</dbReference>
<dbReference type="PRO" id="PR:Q498T9"/>
<dbReference type="Proteomes" id="UP000002494">
    <property type="component" value="Chromosome 14"/>
</dbReference>
<dbReference type="Bgee" id="ENSRNOG00000002122">
    <property type="expression patterns" value="Expressed in ovary and 18 other cell types or tissues"/>
</dbReference>
<dbReference type="GO" id="GO:0005737">
    <property type="term" value="C:cytoplasm"/>
    <property type="evidence" value="ECO:0000250"/>
    <property type="project" value="UniProtKB"/>
</dbReference>
<dbReference type="GO" id="GO:0005783">
    <property type="term" value="C:endoplasmic reticulum"/>
    <property type="evidence" value="ECO:0000266"/>
    <property type="project" value="RGD"/>
</dbReference>
<dbReference type="GO" id="GO:0005789">
    <property type="term" value="C:endoplasmic reticulum membrane"/>
    <property type="evidence" value="ECO:0007669"/>
    <property type="project" value="UniProtKB-SubCell"/>
</dbReference>
<dbReference type="GO" id="GO:0034702">
    <property type="term" value="C:monoatomic ion channel complex"/>
    <property type="evidence" value="ECO:0000315"/>
    <property type="project" value="UniProtKB"/>
</dbReference>
<dbReference type="GO" id="GO:0005886">
    <property type="term" value="C:plasma membrane"/>
    <property type="evidence" value="ECO:0000250"/>
    <property type="project" value="UniProtKB"/>
</dbReference>
<dbReference type="GO" id="GO:0005225">
    <property type="term" value="F:volume-sensitive anion channel activity"/>
    <property type="evidence" value="ECO:0000250"/>
    <property type="project" value="UniProtKB"/>
</dbReference>
<dbReference type="GO" id="GO:0015810">
    <property type="term" value="P:aspartate transmembrane transport"/>
    <property type="evidence" value="ECO:0000315"/>
    <property type="project" value="UniProtKB"/>
</dbReference>
<dbReference type="GO" id="GO:0071470">
    <property type="term" value="P:cellular response to osmotic stress"/>
    <property type="evidence" value="ECO:0000315"/>
    <property type="project" value="UniProtKB"/>
</dbReference>
<dbReference type="GO" id="GO:0140361">
    <property type="term" value="P:cyclic-GMP-AMP transmembrane import across plasma membrane"/>
    <property type="evidence" value="ECO:0000250"/>
    <property type="project" value="UniProtKB"/>
</dbReference>
<dbReference type="GO" id="GO:0045444">
    <property type="term" value="P:fat cell differentiation"/>
    <property type="evidence" value="ECO:0000266"/>
    <property type="project" value="RGD"/>
</dbReference>
<dbReference type="GO" id="GO:0035556">
    <property type="term" value="P:intracellular signal transduction"/>
    <property type="evidence" value="ECO:0000318"/>
    <property type="project" value="GO_Central"/>
</dbReference>
<dbReference type="GO" id="GO:0098656">
    <property type="term" value="P:monoatomic anion transmembrane transport"/>
    <property type="evidence" value="ECO:0000250"/>
    <property type="project" value="UniProtKB"/>
</dbReference>
<dbReference type="GO" id="GO:0034214">
    <property type="term" value="P:protein hexamerization"/>
    <property type="evidence" value="ECO:0000250"/>
    <property type="project" value="UniProtKB"/>
</dbReference>
<dbReference type="GO" id="GO:0015734">
    <property type="term" value="P:taurine transmembrane transport"/>
    <property type="evidence" value="ECO:0000315"/>
    <property type="project" value="UniProtKB"/>
</dbReference>
<dbReference type="FunFam" id="3.80.10.10:FF:000156">
    <property type="entry name" value="volume-regulated anion channel subunit LRRC8C isoform X2"/>
    <property type="match status" value="1"/>
</dbReference>
<dbReference type="FunFam" id="3.80.10.10:FF:000182">
    <property type="entry name" value="volume-regulated anion channel subunit LRRC8C isoform X2"/>
    <property type="match status" value="1"/>
</dbReference>
<dbReference type="Gene3D" id="3.80.10.10">
    <property type="entry name" value="Ribonuclease Inhibitor"/>
    <property type="match status" value="1"/>
</dbReference>
<dbReference type="InterPro" id="IPR001611">
    <property type="entry name" value="Leu-rich_rpt"/>
</dbReference>
<dbReference type="InterPro" id="IPR003591">
    <property type="entry name" value="Leu-rich_rpt_typical-subtyp"/>
</dbReference>
<dbReference type="InterPro" id="IPR032675">
    <property type="entry name" value="LRR_dom_sf"/>
</dbReference>
<dbReference type="InterPro" id="IPR050216">
    <property type="entry name" value="LRR_domain-containing"/>
</dbReference>
<dbReference type="InterPro" id="IPR021040">
    <property type="entry name" value="LRRC8_Pannexin-like"/>
</dbReference>
<dbReference type="PANTHER" id="PTHR48051">
    <property type="match status" value="1"/>
</dbReference>
<dbReference type="PANTHER" id="PTHR48051:SF1">
    <property type="entry name" value="RAS SUPPRESSOR PROTEIN 1"/>
    <property type="match status" value="1"/>
</dbReference>
<dbReference type="Pfam" id="PF00560">
    <property type="entry name" value="LRR_1"/>
    <property type="match status" value="1"/>
</dbReference>
<dbReference type="Pfam" id="PF13855">
    <property type="entry name" value="LRR_8"/>
    <property type="match status" value="1"/>
</dbReference>
<dbReference type="Pfam" id="PF12534">
    <property type="entry name" value="Pannexin_like"/>
    <property type="match status" value="1"/>
</dbReference>
<dbReference type="SMART" id="SM00369">
    <property type="entry name" value="LRR_TYP"/>
    <property type="match status" value="7"/>
</dbReference>
<dbReference type="SUPFAM" id="SSF52058">
    <property type="entry name" value="L domain-like"/>
    <property type="match status" value="1"/>
</dbReference>
<dbReference type="PROSITE" id="PS51450">
    <property type="entry name" value="LRR"/>
    <property type="match status" value="9"/>
</dbReference>
<feature type="chain" id="PRO_0000076249" description="Volume-regulated anion channel subunit LRRC8C">
    <location>
        <begin position="1"/>
        <end position="803"/>
    </location>
</feature>
<feature type="topological domain" description="Cytoplasmic" evidence="1">
    <location>
        <begin position="1"/>
        <end position="22"/>
    </location>
</feature>
<feature type="transmembrane region" description="Helical; Name=1" evidence="1">
    <location>
        <begin position="23"/>
        <end position="43"/>
    </location>
</feature>
<feature type="topological domain" description="Extracellular" evidence="1">
    <location>
        <begin position="44"/>
        <end position="125"/>
    </location>
</feature>
<feature type="transmembrane region" description="Helical; Name=2" evidence="1">
    <location>
        <begin position="126"/>
        <end position="146"/>
    </location>
</feature>
<feature type="topological domain" description="Cytoplasmic" evidence="1">
    <location>
        <begin position="147"/>
        <end position="266"/>
    </location>
</feature>
<feature type="transmembrane region" description="Helical; Name=3" evidence="1">
    <location>
        <begin position="267"/>
        <end position="287"/>
    </location>
</feature>
<feature type="topological domain" description="Extracellular" evidence="1">
    <location>
        <begin position="288"/>
        <end position="320"/>
    </location>
</feature>
<feature type="transmembrane region" description="Helical; Name=4" evidence="1">
    <location>
        <begin position="321"/>
        <end position="341"/>
    </location>
</feature>
<feature type="topological domain" description="Cytoplasmic" evidence="1">
    <location>
        <begin position="342"/>
        <end position="803"/>
    </location>
</feature>
<feature type="repeat" description="LRR 1" evidence="3">
    <location>
        <begin position="397"/>
        <end position="420"/>
    </location>
</feature>
<feature type="repeat" description="LRR 2" evidence="3">
    <location>
        <begin position="421"/>
        <end position="443"/>
    </location>
</feature>
<feature type="repeat" description="LRR 3" evidence="3">
    <location>
        <begin position="446"/>
        <end position="466"/>
    </location>
</feature>
<feature type="repeat" description="LRR 4" evidence="3">
    <location>
        <begin position="467"/>
        <end position="488"/>
    </location>
</feature>
<feature type="repeat" description="LRR 5" evidence="3">
    <location>
        <begin position="490"/>
        <end position="513"/>
    </location>
</feature>
<feature type="repeat" description="LRR 6" evidence="3">
    <location>
        <begin position="515"/>
        <end position="537"/>
    </location>
</feature>
<feature type="repeat" description="LRR 7" evidence="3">
    <location>
        <begin position="541"/>
        <end position="563"/>
    </location>
</feature>
<feature type="repeat" description="LRR 8" evidence="3">
    <location>
        <begin position="565"/>
        <end position="587"/>
    </location>
</feature>
<feature type="repeat" description="LRR 9" evidence="3">
    <location>
        <begin position="588"/>
        <end position="611"/>
    </location>
</feature>
<feature type="repeat" description="LRR 10" evidence="3">
    <location>
        <begin position="613"/>
        <end position="635"/>
    </location>
</feature>
<feature type="repeat" description="LRR 11" evidence="3">
    <location>
        <begin position="637"/>
        <end position="659"/>
    </location>
</feature>
<feature type="repeat" description="LRR 12" evidence="3">
    <location>
        <begin position="660"/>
        <end position="682"/>
    </location>
</feature>
<feature type="repeat" description="LRR 13" evidence="3">
    <location>
        <begin position="684"/>
        <end position="705"/>
    </location>
</feature>
<feature type="repeat" description="LRR 14" evidence="3">
    <location>
        <begin position="706"/>
        <end position="728"/>
    </location>
</feature>
<feature type="repeat" description="LRR 15" evidence="3">
    <location>
        <begin position="730"/>
        <end position="751"/>
    </location>
</feature>
<feature type="repeat" description="LRR 16" evidence="3">
    <location>
        <begin position="752"/>
        <end position="774"/>
    </location>
</feature>
<feature type="repeat" description="LRR 17" evidence="3">
    <location>
        <begin position="776"/>
        <end position="799"/>
    </location>
</feature>
<feature type="region of interest" description="Disordered" evidence="6">
    <location>
        <begin position="177"/>
        <end position="211"/>
    </location>
</feature>
<feature type="compositionally biased region" description="Polar residues" evidence="6">
    <location>
        <begin position="191"/>
        <end position="211"/>
    </location>
</feature>
<feature type="modified residue" description="Phosphoserine" evidence="12">
    <location>
        <position position="212"/>
    </location>
</feature>
<feature type="modified residue" description="Phosphoserine" evidence="12">
    <location>
        <position position="215"/>
    </location>
</feature>
<feature type="glycosylation site" description="N-linked (GlcNAc...) asparagine" evidence="5">
    <location>
        <position position="64"/>
    </location>
</feature>
<feature type="glycosylation site" description="N-linked (GlcNAc...) asparagine" evidence="5">
    <location>
        <position position="70"/>
    </location>
</feature>
<feature type="disulfide bond" evidence="1">
    <location>
        <begin position="54"/>
        <end position="308"/>
    </location>
</feature>
<feature type="disulfide bond" evidence="1">
    <location>
        <begin position="115"/>
        <end position="293"/>
    </location>
</feature>
<accession>Q498T9</accession>
<proteinExistence type="evidence at protein level"/>
<comment type="function">
    <text evidence="4 7">Non-essential component of the volume-regulated anion channel (VRAC, also named VSOAC channel), an anion channel required to maintain a constant cell volume in response to extracellular or intracellular osmotic changes (PubMed:28833202). The VRAC channel conducts iodide better than chloride and can also conduct organic osmolytes like taurine (By similarity). Plays a redundant role in the efflux of amino acids, such as aspartate and glutamate, in response to osmotic stress (By similarity). The VRAC channel also mediates transport of immunoreactive cyclic dinucleotide GMP-AMP (2'-3'-cGAMP), an immune messenger produced in response to DNA virus in the cytosol (By similarity). Channel activity requires LRRC8A plus at least one other family member (LRRC8B, LRRC8C, LRRC8D or LRRC8E); channel characteristics depend on the precise subunit composition (PubMed:28833202).</text>
</comment>
<comment type="catalytic activity">
    <reaction evidence="4">
        <text>chloride(in) = chloride(out)</text>
        <dbReference type="Rhea" id="RHEA:29823"/>
        <dbReference type="ChEBI" id="CHEBI:17996"/>
    </reaction>
</comment>
<comment type="catalytic activity">
    <reaction evidence="4">
        <text>iodide(out) = iodide(in)</text>
        <dbReference type="Rhea" id="RHEA:66324"/>
        <dbReference type="ChEBI" id="CHEBI:16382"/>
    </reaction>
</comment>
<comment type="catalytic activity">
    <reaction evidence="4">
        <text>taurine(out) = taurine(in)</text>
        <dbReference type="Rhea" id="RHEA:66328"/>
        <dbReference type="ChEBI" id="CHEBI:507393"/>
    </reaction>
</comment>
<comment type="catalytic activity">
    <reaction evidence="4">
        <text>2',3'-cGAMP(out) = 2',3'-cGAMP(in)</text>
        <dbReference type="Rhea" id="RHEA:66320"/>
        <dbReference type="ChEBI" id="CHEBI:143093"/>
    </reaction>
    <physiologicalReaction direction="left-to-right" evidence="4">
        <dbReference type="Rhea" id="RHEA:66321"/>
    </physiologicalReaction>
    <physiologicalReaction direction="right-to-left" evidence="4">
        <dbReference type="Rhea" id="RHEA:66322"/>
    </physiologicalReaction>
</comment>
<comment type="subunit">
    <text evidence="3 4 10">Heterohexamer; oligomerizes with other LRRC8 proteins (LRRC8A, LRRC8B, LRRC8D and/or LRRC8E) to form a heterohexamer (By similarity). Homoheptamer; inactive, likely because it is not targeted to the plasma membrane in the absence of LRRC8A (By similarity). In vivo, the subunit composition may depend primarily on expression levels, and heterooligomeric channels containing various proportions of the different LRRC8 proteins may coexist (By similarity).</text>
</comment>
<comment type="subcellular location">
    <subcellularLocation>
        <location evidence="7">Cell membrane</location>
        <topology evidence="4">Multi-pass membrane protein</topology>
    </subcellularLocation>
    <subcellularLocation>
        <location evidence="4">Endoplasmic reticulum membrane</location>
    </subcellularLocation>
    <text evidence="4">In the absence of LRRC8A, resides primarily in a cytoplasmic compartment, probably the endoplasmic reticulum. Requires LRRC8A for expression at the cell membrane.</text>
</comment>
<comment type="domain">
    <text evidence="2">The volume-regulated anion channel (VRAC) channel forms a trimer of dimers, with symmetry mismatch between the pore-forming domain and the cytosolic LRR repeats, a topology similar to gap junction proteins.</text>
</comment>
<comment type="domain">
    <text evidence="4">The cytoplasmic N-terminus preceding the first transmembrane (residues 1-22) regulates volume-regulated anion channel (VRAC) conductance, ion permeability and inactivation gating.</text>
</comment>
<comment type="similarity">
    <text evidence="9">Belongs to the LRRC8 family.</text>
</comment>
<gene>
    <name evidence="8 11" type="primary">Lrrc8c</name>
</gene>
<evidence type="ECO:0000250" key="1">
    <source>
        <dbReference type="UniProtKB" id="Q80WG5"/>
    </source>
</evidence>
<evidence type="ECO:0000250" key="2">
    <source>
        <dbReference type="UniProtKB" id="Q8IWT6"/>
    </source>
</evidence>
<evidence type="ECO:0000250" key="3">
    <source>
        <dbReference type="UniProtKB" id="Q8R502"/>
    </source>
</evidence>
<evidence type="ECO:0000250" key="4">
    <source>
        <dbReference type="UniProtKB" id="Q8TDW0"/>
    </source>
</evidence>
<evidence type="ECO:0000255" key="5"/>
<evidence type="ECO:0000256" key="6">
    <source>
        <dbReference type="SAM" id="MobiDB-lite"/>
    </source>
</evidence>
<evidence type="ECO:0000269" key="7">
    <source>
    </source>
</evidence>
<evidence type="ECO:0000303" key="8">
    <source>
    </source>
</evidence>
<evidence type="ECO:0000305" key="9"/>
<evidence type="ECO:0000305" key="10">
    <source>
    </source>
</evidence>
<evidence type="ECO:0000312" key="11">
    <source>
        <dbReference type="RGD" id="1306585"/>
    </source>
</evidence>
<evidence type="ECO:0007744" key="12">
    <source>
    </source>
</evidence>
<sequence length="803" mass="92463">MIPVTEFRQFSEQQPAFRVLKPWWDVFTDYLSVAMLMIGVFGCTLQVMQDKIICLPKRVQPAQNHSSLSNVSQTVINTTPLPPPKPSPTNPATVEMKGLKTDLDLQQYSFINQMCYERALHWYAKYFPYLVLIHTLVFMLCSNFWFKFPGSSSKIEHFISILGKCFDSPWTTRALSEVSGEDSEEKDNRKNNMNRSNTIQSGPEGSLVKSQSLKSIPEKFVVDKSTAGALDKKEGEQAKALFEKVKKFRLHVEEGDILYAMYVRQTVLKVIKFLIIIAYNSALVSKVQFTVDCNVDIQDMTGYKNFSCNHTMAHLFSKLSFCYLCFVSIYGLTCLYTLYWLFYRSLREYSFEYVRQETGIDDIPDVKNDFAFMLHMIDQYDPLYSKRFAVFLSEVSENKLKQLNLNNEWTPDKLRQKLQTNAHNRLELPLIMLSGLPDTVFEITELQSLKLEIIKNVMIPATIAQLDNLQELSLHQCSVKIHSAALSFLKENLKVLSVKFDDMRELPPWMYGLRNLEELYLVGSLSHDISKNVTLESLRDLKSLKILSIKSNVSKIPQAVVDVSSHLQKMCIHNDGTKLVMLNNLKKMTNLTELELVHCDLERIPHAVFSLLSLQELDLKENNLKSIEEIVSFQHLRKLTVLKLWYNSIAYIPEHIKKLTSLERLFFSHNKVEVLPSHLFLCNKIRYLDLSYNDIRFIPPEIGVLQSLQYFSITCNKVESLPDELYFCKKLKTLKIGKNSLSVLSPKIGNLLFLSYLDIKGNHFEVLPPELGDCRALKRAGLVVEDALFETLPSDVREQMKAD</sequence>
<name>LRC8C_RAT</name>
<keyword id="KW-1003">Cell membrane</keyword>
<keyword id="KW-1015">Disulfide bond</keyword>
<keyword id="KW-0256">Endoplasmic reticulum</keyword>
<keyword id="KW-0325">Glycoprotein</keyword>
<keyword id="KW-0407">Ion channel</keyword>
<keyword id="KW-0406">Ion transport</keyword>
<keyword id="KW-0433">Leucine-rich repeat</keyword>
<keyword id="KW-0472">Membrane</keyword>
<keyword id="KW-0597">Phosphoprotein</keyword>
<keyword id="KW-1185">Reference proteome</keyword>
<keyword id="KW-0677">Repeat</keyword>
<keyword id="KW-0812">Transmembrane</keyword>
<keyword id="KW-1133">Transmembrane helix</keyword>
<keyword id="KW-0813">Transport</keyword>
<reference key="1">
    <citation type="journal article" date="2004" name="Genome Res.">
        <title>The status, quality, and expansion of the NIH full-length cDNA project: the Mammalian Gene Collection (MGC).</title>
        <authorList>
            <consortium name="The MGC Project Team"/>
        </authorList>
    </citation>
    <scope>NUCLEOTIDE SEQUENCE [LARGE SCALE MRNA]</scope>
    <source>
        <tissue>Thymus</tissue>
    </source>
</reference>
<reference key="2">
    <citation type="journal article" date="2012" name="Nat. Commun.">
        <title>Quantitative maps of protein phosphorylation sites across 14 different rat organs and tissues.</title>
        <authorList>
            <person name="Lundby A."/>
            <person name="Secher A."/>
            <person name="Lage K."/>
            <person name="Nordsborg N.B."/>
            <person name="Dmytriyev A."/>
            <person name="Lundby C."/>
            <person name="Olsen J.V."/>
        </authorList>
    </citation>
    <scope>PHOSPHORYLATION [LARGE SCALE ANALYSIS] AT SER-212 AND SER-215</scope>
    <scope>IDENTIFICATION BY MASS SPECTROMETRY [LARGE SCALE ANALYSIS]</scope>
</reference>
<reference key="3">
    <citation type="journal article" date="2017" name="J. Physiol. (Lond.)">
        <title>Molecular composition and heterogeneity of the LRRC8-containing swelling-activated osmolyte channels in primary rat astrocytes.</title>
        <authorList>
            <person name="Schober A.L."/>
            <person name="Wilson C.S."/>
            <person name="Mongin A.A."/>
        </authorList>
    </citation>
    <scope>FUNCTION</scope>
    <scope>SUBCELLULAR LOCATION</scope>
    <scope>SUBUNIT</scope>
</reference>
<organism>
    <name type="scientific">Rattus norvegicus</name>
    <name type="common">Rat</name>
    <dbReference type="NCBI Taxonomy" id="10116"/>
    <lineage>
        <taxon>Eukaryota</taxon>
        <taxon>Metazoa</taxon>
        <taxon>Chordata</taxon>
        <taxon>Craniata</taxon>
        <taxon>Vertebrata</taxon>
        <taxon>Euteleostomi</taxon>
        <taxon>Mammalia</taxon>
        <taxon>Eutheria</taxon>
        <taxon>Euarchontoglires</taxon>
        <taxon>Glires</taxon>
        <taxon>Rodentia</taxon>
        <taxon>Myomorpha</taxon>
        <taxon>Muroidea</taxon>
        <taxon>Muridae</taxon>
        <taxon>Murinae</taxon>
        <taxon>Rattus</taxon>
    </lineage>
</organism>
<protein>
    <recommendedName>
        <fullName evidence="3">Volume-regulated anion channel subunit LRRC8C</fullName>
    </recommendedName>
    <alternativeName>
        <fullName evidence="8">Leucine-rich repeat-containing protein 8C</fullName>
    </alternativeName>
</protein>